<feature type="chain" id="PRO_0000182079" description="UDP-N-acetylmuramate--L-alanine ligase">
    <location>
        <begin position="1"/>
        <end position="458"/>
    </location>
</feature>
<feature type="binding site" evidence="1">
    <location>
        <begin position="118"/>
        <end position="124"/>
    </location>
    <ligand>
        <name>ATP</name>
        <dbReference type="ChEBI" id="CHEBI:30616"/>
    </ligand>
</feature>
<evidence type="ECO:0000255" key="1">
    <source>
        <dbReference type="HAMAP-Rule" id="MF_00046"/>
    </source>
</evidence>
<gene>
    <name evidence="1" type="primary">murC</name>
    <name type="ordered locus">CA_C3225</name>
</gene>
<organism>
    <name type="scientific">Clostridium acetobutylicum (strain ATCC 824 / DSM 792 / JCM 1419 / IAM 19013 / LMG 5710 / NBRC 13948 / NRRL B-527 / VKM B-1787 / 2291 / W)</name>
    <dbReference type="NCBI Taxonomy" id="272562"/>
    <lineage>
        <taxon>Bacteria</taxon>
        <taxon>Bacillati</taxon>
        <taxon>Bacillota</taxon>
        <taxon>Clostridia</taxon>
        <taxon>Eubacteriales</taxon>
        <taxon>Clostridiaceae</taxon>
        <taxon>Clostridium</taxon>
    </lineage>
</organism>
<keyword id="KW-0067">ATP-binding</keyword>
<keyword id="KW-0131">Cell cycle</keyword>
<keyword id="KW-0132">Cell division</keyword>
<keyword id="KW-0133">Cell shape</keyword>
<keyword id="KW-0961">Cell wall biogenesis/degradation</keyword>
<keyword id="KW-0963">Cytoplasm</keyword>
<keyword id="KW-0436">Ligase</keyword>
<keyword id="KW-0547">Nucleotide-binding</keyword>
<keyword id="KW-0573">Peptidoglycan synthesis</keyword>
<keyword id="KW-1185">Reference proteome</keyword>
<name>MURC_CLOAB</name>
<dbReference type="EC" id="6.3.2.8" evidence="1"/>
<dbReference type="EMBL" id="AE001437">
    <property type="protein sequence ID" value="AAK81161.1"/>
    <property type="molecule type" value="Genomic_DNA"/>
</dbReference>
<dbReference type="PIR" id="F97296">
    <property type="entry name" value="F97296"/>
</dbReference>
<dbReference type="RefSeq" id="NP_349821.1">
    <property type="nucleotide sequence ID" value="NC_003030.1"/>
</dbReference>
<dbReference type="RefSeq" id="WP_010966501.1">
    <property type="nucleotide sequence ID" value="NC_003030.1"/>
</dbReference>
<dbReference type="SMR" id="Q97E89"/>
<dbReference type="STRING" id="272562.CA_C3225"/>
<dbReference type="GeneID" id="44999721"/>
<dbReference type="KEGG" id="cac:CA_C3225"/>
<dbReference type="PATRIC" id="fig|272562.8.peg.3404"/>
<dbReference type="eggNOG" id="COG0773">
    <property type="taxonomic scope" value="Bacteria"/>
</dbReference>
<dbReference type="HOGENOM" id="CLU_028104_1_0_9"/>
<dbReference type="OrthoDB" id="9804126at2"/>
<dbReference type="UniPathway" id="UPA00219"/>
<dbReference type="Proteomes" id="UP000000814">
    <property type="component" value="Chromosome"/>
</dbReference>
<dbReference type="GO" id="GO:0005737">
    <property type="term" value="C:cytoplasm"/>
    <property type="evidence" value="ECO:0007669"/>
    <property type="project" value="UniProtKB-SubCell"/>
</dbReference>
<dbReference type="GO" id="GO:0005524">
    <property type="term" value="F:ATP binding"/>
    <property type="evidence" value="ECO:0007669"/>
    <property type="project" value="UniProtKB-UniRule"/>
</dbReference>
<dbReference type="GO" id="GO:0008763">
    <property type="term" value="F:UDP-N-acetylmuramate-L-alanine ligase activity"/>
    <property type="evidence" value="ECO:0007669"/>
    <property type="project" value="UniProtKB-UniRule"/>
</dbReference>
<dbReference type="GO" id="GO:0051301">
    <property type="term" value="P:cell division"/>
    <property type="evidence" value="ECO:0007669"/>
    <property type="project" value="UniProtKB-KW"/>
</dbReference>
<dbReference type="GO" id="GO:0071555">
    <property type="term" value="P:cell wall organization"/>
    <property type="evidence" value="ECO:0007669"/>
    <property type="project" value="UniProtKB-KW"/>
</dbReference>
<dbReference type="GO" id="GO:0009252">
    <property type="term" value="P:peptidoglycan biosynthetic process"/>
    <property type="evidence" value="ECO:0007669"/>
    <property type="project" value="UniProtKB-UniRule"/>
</dbReference>
<dbReference type="GO" id="GO:0008360">
    <property type="term" value="P:regulation of cell shape"/>
    <property type="evidence" value="ECO:0007669"/>
    <property type="project" value="UniProtKB-KW"/>
</dbReference>
<dbReference type="Gene3D" id="3.90.190.20">
    <property type="entry name" value="Mur ligase, C-terminal domain"/>
    <property type="match status" value="1"/>
</dbReference>
<dbReference type="Gene3D" id="3.40.1190.10">
    <property type="entry name" value="Mur-like, catalytic domain"/>
    <property type="match status" value="1"/>
</dbReference>
<dbReference type="Gene3D" id="3.40.50.720">
    <property type="entry name" value="NAD(P)-binding Rossmann-like Domain"/>
    <property type="match status" value="1"/>
</dbReference>
<dbReference type="HAMAP" id="MF_00046">
    <property type="entry name" value="MurC"/>
    <property type="match status" value="1"/>
</dbReference>
<dbReference type="InterPro" id="IPR036565">
    <property type="entry name" value="Mur-like_cat_sf"/>
</dbReference>
<dbReference type="InterPro" id="IPR004101">
    <property type="entry name" value="Mur_ligase_C"/>
</dbReference>
<dbReference type="InterPro" id="IPR036615">
    <property type="entry name" value="Mur_ligase_C_dom_sf"/>
</dbReference>
<dbReference type="InterPro" id="IPR013221">
    <property type="entry name" value="Mur_ligase_cen"/>
</dbReference>
<dbReference type="InterPro" id="IPR000713">
    <property type="entry name" value="Mur_ligase_N"/>
</dbReference>
<dbReference type="InterPro" id="IPR050061">
    <property type="entry name" value="MurCDEF_pg_biosynth"/>
</dbReference>
<dbReference type="InterPro" id="IPR005758">
    <property type="entry name" value="UDP-N-AcMur_Ala_ligase_MurC"/>
</dbReference>
<dbReference type="NCBIfam" id="TIGR01082">
    <property type="entry name" value="murC"/>
    <property type="match status" value="1"/>
</dbReference>
<dbReference type="PANTHER" id="PTHR43445:SF3">
    <property type="entry name" value="UDP-N-ACETYLMURAMATE--L-ALANINE LIGASE"/>
    <property type="match status" value="1"/>
</dbReference>
<dbReference type="PANTHER" id="PTHR43445">
    <property type="entry name" value="UDP-N-ACETYLMURAMATE--L-ALANINE LIGASE-RELATED"/>
    <property type="match status" value="1"/>
</dbReference>
<dbReference type="Pfam" id="PF01225">
    <property type="entry name" value="Mur_ligase"/>
    <property type="match status" value="1"/>
</dbReference>
<dbReference type="Pfam" id="PF02875">
    <property type="entry name" value="Mur_ligase_C"/>
    <property type="match status" value="1"/>
</dbReference>
<dbReference type="Pfam" id="PF08245">
    <property type="entry name" value="Mur_ligase_M"/>
    <property type="match status" value="1"/>
</dbReference>
<dbReference type="SUPFAM" id="SSF51984">
    <property type="entry name" value="MurCD N-terminal domain"/>
    <property type="match status" value="1"/>
</dbReference>
<dbReference type="SUPFAM" id="SSF53623">
    <property type="entry name" value="MurD-like peptide ligases, catalytic domain"/>
    <property type="match status" value="1"/>
</dbReference>
<dbReference type="SUPFAM" id="SSF53244">
    <property type="entry name" value="MurD-like peptide ligases, peptide-binding domain"/>
    <property type="match status" value="1"/>
</dbReference>
<sequence>MSFDLKNDISKKIHFIGIGGVSMSGLAEILLERGFKVSGSDMNGSPMIDKLKEHGAEIYLGHNEKNINNVDIVVYTAAIPEDNPELIYARKNNISLMTRAEFLGSLMKGHKYNIAISGTHGKTTTTSMVSHIALTEDVDPTILVGGNLDIINGNVLAGKSDYFITEACEYKASFLEFYPYIGVILNIDADHLDYYKNIDDIENTFAKFVNLIPKEGYLIANADDKRVARVASNATCNVVSFGIDNGDIRAKNISFNESGFSSFDVYKSSELLFNIELNVPGKHNILNALSAIASALTLKISHKSIIDGLKSFKGTHRRFEIKGVKNGITVIDDYAHHPTEIKATLDAAKNYPHNKIYCVFQPHTYSRTLSLFDDFSNSFSGVDELVLADIYAAREKDTGVVSSLKLSEAINKNGVKSSNLHSFEDIVNYFKSKLNDGDILLTVGAGDVFKIGEMFLSK</sequence>
<protein>
    <recommendedName>
        <fullName evidence="1">UDP-N-acetylmuramate--L-alanine ligase</fullName>
        <ecNumber evidence="1">6.3.2.8</ecNumber>
    </recommendedName>
    <alternativeName>
        <fullName evidence="1">UDP-N-acetylmuramoyl-L-alanine synthetase</fullName>
    </alternativeName>
</protein>
<proteinExistence type="inferred from homology"/>
<reference key="1">
    <citation type="journal article" date="2001" name="J. Bacteriol.">
        <title>Genome sequence and comparative analysis of the solvent-producing bacterium Clostridium acetobutylicum.</title>
        <authorList>
            <person name="Noelling J."/>
            <person name="Breton G."/>
            <person name="Omelchenko M.V."/>
            <person name="Makarova K.S."/>
            <person name="Zeng Q."/>
            <person name="Gibson R."/>
            <person name="Lee H.M."/>
            <person name="Dubois J."/>
            <person name="Qiu D."/>
            <person name="Hitti J."/>
            <person name="Wolf Y.I."/>
            <person name="Tatusov R.L."/>
            <person name="Sabathe F."/>
            <person name="Doucette-Stamm L.A."/>
            <person name="Soucaille P."/>
            <person name="Daly M.J."/>
            <person name="Bennett G.N."/>
            <person name="Koonin E.V."/>
            <person name="Smith D.R."/>
        </authorList>
    </citation>
    <scope>NUCLEOTIDE SEQUENCE [LARGE SCALE GENOMIC DNA]</scope>
    <source>
        <strain>ATCC 824 / DSM 792 / JCM 1419 / IAM 19013 / LMG 5710 / NBRC 13948 / NRRL B-527 / VKM B-1787 / 2291 / W</strain>
    </source>
</reference>
<comment type="function">
    <text evidence="1">Cell wall formation.</text>
</comment>
<comment type="catalytic activity">
    <reaction evidence="1">
        <text>UDP-N-acetyl-alpha-D-muramate + L-alanine + ATP = UDP-N-acetyl-alpha-D-muramoyl-L-alanine + ADP + phosphate + H(+)</text>
        <dbReference type="Rhea" id="RHEA:23372"/>
        <dbReference type="ChEBI" id="CHEBI:15378"/>
        <dbReference type="ChEBI" id="CHEBI:30616"/>
        <dbReference type="ChEBI" id="CHEBI:43474"/>
        <dbReference type="ChEBI" id="CHEBI:57972"/>
        <dbReference type="ChEBI" id="CHEBI:70757"/>
        <dbReference type="ChEBI" id="CHEBI:83898"/>
        <dbReference type="ChEBI" id="CHEBI:456216"/>
        <dbReference type="EC" id="6.3.2.8"/>
    </reaction>
</comment>
<comment type="pathway">
    <text evidence="1">Cell wall biogenesis; peptidoglycan biosynthesis.</text>
</comment>
<comment type="subcellular location">
    <subcellularLocation>
        <location evidence="1">Cytoplasm</location>
    </subcellularLocation>
</comment>
<comment type="similarity">
    <text evidence="1">Belongs to the MurCDEF family.</text>
</comment>
<accession>Q97E89</accession>